<protein>
    <recommendedName>
        <fullName evidence="1">S-adenosylmethionine decarboxylase proenzyme</fullName>
        <shortName evidence="1">AdoMetDC</shortName>
        <shortName evidence="1">SAMDC</shortName>
        <ecNumber evidence="1">4.1.1.50</ecNumber>
    </recommendedName>
    <component>
        <recommendedName>
            <fullName evidence="1">S-adenosylmethionine decarboxylase beta chain</fullName>
        </recommendedName>
    </component>
    <component>
        <recommendedName>
            <fullName evidence="1">S-adenosylmethionine decarboxylase alpha chain</fullName>
        </recommendedName>
    </component>
</protein>
<gene>
    <name evidence="1" type="primary">speH</name>
    <name type="ordered locus">AFE_0157</name>
</gene>
<evidence type="ECO:0000255" key="1">
    <source>
        <dbReference type="HAMAP-Rule" id="MF_00464"/>
    </source>
</evidence>
<proteinExistence type="inferred from homology"/>
<feature type="chain" id="PRO_1000193163" description="S-adenosylmethionine decarboxylase beta chain" evidence="1">
    <location>
        <begin position="1"/>
        <end position="62"/>
    </location>
</feature>
<feature type="chain" id="PRO_1000193164" description="S-adenosylmethionine decarboxylase alpha chain" evidence="1">
    <location>
        <begin position="63"/>
        <end position="133"/>
    </location>
</feature>
<feature type="active site" description="Schiff-base intermediate with substrate; via pyruvic acid" evidence="1">
    <location>
        <position position="63"/>
    </location>
</feature>
<feature type="active site" description="Proton acceptor; for processing activity" evidence="1">
    <location>
        <position position="68"/>
    </location>
</feature>
<feature type="active site" description="Proton donor; for catalytic activity" evidence="1">
    <location>
        <position position="83"/>
    </location>
</feature>
<feature type="site" description="Cleavage (non-hydrolytic); by autolysis" evidence="1">
    <location>
        <begin position="62"/>
        <end position="63"/>
    </location>
</feature>
<feature type="modified residue" description="Pyruvic acid (Ser); by autocatalysis" evidence="1">
    <location>
        <position position="63"/>
    </location>
</feature>
<comment type="function">
    <text evidence="1">Catalyzes the decarboxylation of S-adenosylmethionine to S-adenosylmethioninamine (dcAdoMet), the propylamine donor required for the synthesis of the polyamines spermine and spermidine from the diamine putrescine.</text>
</comment>
<comment type="catalytic activity">
    <reaction evidence="1">
        <text>S-adenosyl-L-methionine + H(+) = S-adenosyl 3-(methylsulfanyl)propylamine + CO2</text>
        <dbReference type="Rhea" id="RHEA:15981"/>
        <dbReference type="ChEBI" id="CHEBI:15378"/>
        <dbReference type="ChEBI" id="CHEBI:16526"/>
        <dbReference type="ChEBI" id="CHEBI:57443"/>
        <dbReference type="ChEBI" id="CHEBI:59789"/>
        <dbReference type="EC" id="4.1.1.50"/>
    </reaction>
</comment>
<comment type="cofactor">
    <cofactor evidence="1">
        <name>pyruvate</name>
        <dbReference type="ChEBI" id="CHEBI:15361"/>
    </cofactor>
    <text evidence="1">Binds 1 pyruvoyl group covalently per subunit.</text>
</comment>
<comment type="pathway">
    <text evidence="1">Amine and polyamine biosynthesis; S-adenosylmethioninamine biosynthesis; S-adenosylmethioninamine from S-adenosyl-L-methionine: step 1/1.</text>
</comment>
<comment type="subunit">
    <text evidence="1">Heterotetramer of two alpha and two beta chains arranged as a dimer of alpha/beta heterodimers.</text>
</comment>
<comment type="PTM">
    <text evidence="1">Is synthesized initially as an inactive proenzyme. Formation of the active enzyme involves a self-maturation process in which the active site pyruvoyl group is generated from an internal serine residue via an autocatalytic post-translational modification. Two non-identical subunits are generated from the proenzyme in this reaction, and the pyruvate is formed at the N-terminus of the alpha chain, which is derived from the carboxyl end of the proenzyme. The post-translation cleavage follows an unusual pathway, termed non-hydrolytic serinolysis, in which the side chain hydroxyl group of the serine supplies its oxygen atom to form the C-terminus of the beta chain, while the remainder of the serine residue undergoes an oxidative deamination to produce ammonia and the pyruvoyl group blocking the N-terminus of the alpha chain.</text>
</comment>
<comment type="similarity">
    <text evidence="1">Belongs to the prokaryotic AdoMetDC family. Type 1 subfamily.</text>
</comment>
<dbReference type="EC" id="4.1.1.50" evidence="1"/>
<dbReference type="EMBL" id="CP001219">
    <property type="protein sequence ID" value="ACK79118.1"/>
    <property type="molecule type" value="Genomic_DNA"/>
</dbReference>
<dbReference type="RefSeq" id="WP_012535989.1">
    <property type="nucleotide sequence ID" value="NC_011761.1"/>
</dbReference>
<dbReference type="SMR" id="B7J3Q3"/>
<dbReference type="STRING" id="243159.AFE_0157"/>
<dbReference type="PaxDb" id="243159-AFE_0157"/>
<dbReference type="GeneID" id="65279542"/>
<dbReference type="KEGG" id="afr:AFE_0157"/>
<dbReference type="eggNOG" id="COG1586">
    <property type="taxonomic scope" value="Bacteria"/>
</dbReference>
<dbReference type="HOGENOM" id="CLU_125470_2_3_6"/>
<dbReference type="UniPathway" id="UPA00331">
    <property type="reaction ID" value="UER00451"/>
</dbReference>
<dbReference type="Proteomes" id="UP000001362">
    <property type="component" value="Chromosome"/>
</dbReference>
<dbReference type="GO" id="GO:0005829">
    <property type="term" value="C:cytosol"/>
    <property type="evidence" value="ECO:0007669"/>
    <property type="project" value="TreeGrafter"/>
</dbReference>
<dbReference type="GO" id="GO:0004014">
    <property type="term" value="F:adenosylmethionine decarboxylase activity"/>
    <property type="evidence" value="ECO:0007669"/>
    <property type="project" value="UniProtKB-UniRule"/>
</dbReference>
<dbReference type="GO" id="GO:0008295">
    <property type="term" value="P:spermidine biosynthetic process"/>
    <property type="evidence" value="ECO:0007669"/>
    <property type="project" value="UniProtKB-UniRule"/>
</dbReference>
<dbReference type="Gene3D" id="3.30.160.750">
    <property type="match status" value="1"/>
</dbReference>
<dbReference type="Gene3D" id="3.30.360.110">
    <property type="entry name" value="S-adenosylmethionine decarboxylase domain"/>
    <property type="match status" value="1"/>
</dbReference>
<dbReference type="HAMAP" id="MF_00464">
    <property type="entry name" value="AdoMetDC_1"/>
    <property type="match status" value="1"/>
</dbReference>
<dbReference type="InterPro" id="IPR042286">
    <property type="entry name" value="AdoMetDC_C"/>
</dbReference>
<dbReference type="InterPro" id="IPR003826">
    <property type="entry name" value="AdoMetDC_fam_prok"/>
</dbReference>
<dbReference type="InterPro" id="IPR042284">
    <property type="entry name" value="AdoMetDC_N"/>
</dbReference>
<dbReference type="InterPro" id="IPR016067">
    <property type="entry name" value="S-AdoMet_deCO2ase_core"/>
</dbReference>
<dbReference type="InterPro" id="IPR017716">
    <property type="entry name" value="S-AdoMet_deCOase_pro-enz"/>
</dbReference>
<dbReference type="NCBIfam" id="TIGR03330">
    <property type="entry name" value="SAM_DCase_Bsu"/>
    <property type="match status" value="1"/>
</dbReference>
<dbReference type="PANTHER" id="PTHR33866">
    <property type="entry name" value="S-ADENOSYLMETHIONINE DECARBOXYLASE PROENZYME"/>
    <property type="match status" value="1"/>
</dbReference>
<dbReference type="PANTHER" id="PTHR33866:SF2">
    <property type="entry name" value="S-ADENOSYLMETHIONINE DECARBOXYLASE PROENZYME"/>
    <property type="match status" value="1"/>
</dbReference>
<dbReference type="Pfam" id="PF02675">
    <property type="entry name" value="AdoMet_dc"/>
    <property type="match status" value="1"/>
</dbReference>
<dbReference type="SUPFAM" id="SSF56276">
    <property type="entry name" value="S-adenosylmethionine decarboxylase"/>
    <property type="match status" value="1"/>
</dbReference>
<name>SPEH_ACIF2</name>
<organism>
    <name type="scientific">Acidithiobacillus ferrooxidans (strain ATCC 23270 / DSM 14882 / CIP 104768 / NCIMB 8455)</name>
    <name type="common">Ferrobacillus ferrooxidans (strain ATCC 23270)</name>
    <dbReference type="NCBI Taxonomy" id="243159"/>
    <lineage>
        <taxon>Bacteria</taxon>
        <taxon>Pseudomonadati</taxon>
        <taxon>Pseudomonadota</taxon>
        <taxon>Acidithiobacillia</taxon>
        <taxon>Acidithiobacillales</taxon>
        <taxon>Acidithiobacillaceae</taxon>
        <taxon>Acidithiobacillus</taxon>
    </lineage>
</organism>
<accession>B7J3Q3</accession>
<sequence>MRSLGHQIVADFYHCDGSTLSDVDFVTDAMLEAARRANCTIVTQTFHHFSPYGVSGAVIVAESHLAIHTWPEYGYAAVDVFTCGDIIQPEDALNYLKEAFGAGQVSTMEMKRGQVDMMGVPAHELRVKPALCA</sequence>
<reference key="1">
    <citation type="journal article" date="2008" name="BMC Genomics">
        <title>Acidithiobacillus ferrooxidans metabolism: from genome sequence to industrial applications.</title>
        <authorList>
            <person name="Valdes J."/>
            <person name="Pedroso I."/>
            <person name="Quatrini R."/>
            <person name="Dodson R.J."/>
            <person name="Tettelin H."/>
            <person name="Blake R. II"/>
            <person name="Eisen J.A."/>
            <person name="Holmes D.S."/>
        </authorList>
    </citation>
    <scope>NUCLEOTIDE SEQUENCE [LARGE SCALE GENOMIC DNA]</scope>
    <source>
        <strain>ATCC 23270 / DSM 14882 / CIP 104768 / NCIMB 8455</strain>
    </source>
</reference>
<keyword id="KW-0068">Autocatalytic cleavage</keyword>
<keyword id="KW-0210">Decarboxylase</keyword>
<keyword id="KW-0456">Lyase</keyword>
<keyword id="KW-0620">Polyamine biosynthesis</keyword>
<keyword id="KW-0670">Pyruvate</keyword>
<keyword id="KW-1185">Reference proteome</keyword>
<keyword id="KW-0949">S-adenosyl-L-methionine</keyword>
<keyword id="KW-0704">Schiff base</keyword>
<keyword id="KW-0745">Spermidine biosynthesis</keyword>
<keyword id="KW-0865">Zymogen</keyword>